<sequence>MKMASSLAFLLLNFHVSLLLVQLLTPCSAQFSVLGPSGPILAMVGEDADLPCHLFPTMSAETMELKWVSSSLRQVVNVYADGKEVEDRQSAPYRGRTSILRDGITAGKAALRIHNVTASDSGKYLCYFQDGDFYEKALVELKVAALGSNLHVEVKGYEDGGIHLECRSTGWYPQPQIQWSNAKGENIPAVEAPVVADGVGLYEVAASVIMRGGSGEGVSCIIRNSLLGLEKTASISIADPFFRSAQPWIAALAGTLPILLLLLAGASYFLWRQQKEITALSSEIESEQEMKEMGYAATEREISLRESLQEELKRKKIQYLTRGEESSSDTNKSA</sequence>
<name>BT3A2_HUMAN</name>
<protein>
    <recommendedName>
        <fullName>Butyrophilin subfamily 3 member A2</fullName>
    </recommendedName>
</protein>
<dbReference type="EMBL" id="U90546">
    <property type="protein sequence ID" value="AAB53424.1"/>
    <property type="status" value="ALT_FRAME"/>
    <property type="molecule type" value="mRNA"/>
</dbReference>
<dbReference type="EMBL" id="U90144">
    <property type="protein sequence ID" value="AAC02652.1"/>
    <property type="status" value="ALT_FRAME"/>
    <property type="molecule type" value="mRNA"/>
</dbReference>
<dbReference type="EMBL" id="U97499">
    <property type="protein sequence ID" value="AAC02655.1"/>
    <property type="status" value="ALT_FRAME"/>
    <property type="molecule type" value="Genomic_DNA"/>
</dbReference>
<dbReference type="EMBL" id="U97498">
    <property type="protein sequence ID" value="AAC02655.1"/>
    <property type="status" value="JOINED"/>
    <property type="molecule type" value="Genomic_DNA"/>
</dbReference>
<dbReference type="EMBL" id="AF257505">
    <property type="protein sequence ID" value="AAF76140.1"/>
    <property type="molecule type" value="mRNA"/>
</dbReference>
<dbReference type="EMBL" id="AK299417">
    <property type="protein sequence ID" value="BAG61399.1"/>
    <property type="molecule type" value="mRNA"/>
</dbReference>
<dbReference type="EMBL" id="AK303600">
    <property type="protein sequence ID" value="BAG64615.1"/>
    <property type="molecule type" value="mRNA"/>
</dbReference>
<dbReference type="EMBL" id="AL021917">
    <property type="status" value="NOT_ANNOTATED_CDS"/>
    <property type="molecule type" value="Genomic_DNA"/>
</dbReference>
<dbReference type="EMBL" id="BC002832">
    <property type="protein sequence ID" value="AAH02832.3"/>
    <property type="molecule type" value="mRNA"/>
</dbReference>
<dbReference type="EMBL" id="BC020214">
    <property type="protein sequence ID" value="AAH20214.3"/>
    <property type="molecule type" value="mRNA"/>
</dbReference>
<dbReference type="CCDS" id="CCDS4605.1">
    <molecule id="P78410-1"/>
</dbReference>
<dbReference type="CCDS" id="CCDS56399.1">
    <molecule id="P78410-2"/>
</dbReference>
<dbReference type="CCDS" id="CCDS56400.1">
    <molecule id="P78410-3"/>
</dbReference>
<dbReference type="RefSeq" id="NP_001184175.1">
    <molecule id="P78410-1"/>
    <property type="nucleotide sequence ID" value="NM_001197246.2"/>
</dbReference>
<dbReference type="RefSeq" id="NP_001184176.1">
    <molecule id="P78410-1"/>
    <property type="nucleotide sequence ID" value="NM_001197247.3"/>
</dbReference>
<dbReference type="RefSeq" id="NP_001184177.1">
    <molecule id="P78410-2"/>
    <property type="nucleotide sequence ID" value="NM_001197248.3"/>
</dbReference>
<dbReference type="RefSeq" id="NP_001184178.1">
    <molecule id="P78410-3"/>
    <property type="nucleotide sequence ID" value="NM_001197249.3"/>
</dbReference>
<dbReference type="RefSeq" id="NP_008978.2">
    <molecule id="P78410-1"/>
    <property type="nucleotide sequence ID" value="NM_007047.4"/>
</dbReference>
<dbReference type="RefSeq" id="XP_005248884.1">
    <molecule id="P78410-1"/>
    <property type="nucleotide sequence ID" value="XM_005248827.5"/>
</dbReference>
<dbReference type="RefSeq" id="XP_016865700.1">
    <property type="nucleotide sequence ID" value="XM_017010211.1"/>
</dbReference>
<dbReference type="RefSeq" id="XP_016865701.1">
    <property type="nucleotide sequence ID" value="XM_017010212.1"/>
</dbReference>
<dbReference type="RefSeq" id="XP_016865703.1">
    <property type="nucleotide sequence ID" value="XM_017010214.1"/>
</dbReference>
<dbReference type="RefSeq" id="XP_047274070.1">
    <molecule id="P78410-1"/>
    <property type="nucleotide sequence ID" value="XM_047418114.1"/>
</dbReference>
<dbReference type="RefSeq" id="XP_047274071.1">
    <molecule id="P78410-1"/>
    <property type="nucleotide sequence ID" value="XM_047418115.1"/>
</dbReference>
<dbReference type="RefSeq" id="XP_054210079.1">
    <molecule id="P78410-1"/>
    <property type="nucleotide sequence ID" value="XM_054354104.1"/>
</dbReference>
<dbReference type="RefSeq" id="XP_054210080.1">
    <molecule id="P78410-1"/>
    <property type="nucleotide sequence ID" value="XM_054354105.1"/>
</dbReference>
<dbReference type="RefSeq" id="XP_054210081.1">
    <molecule id="P78410-1"/>
    <property type="nucleotide sequence ID" value="XM_054354106.1"/>
</dbReference>
<dbReference type="PDB" id="4F8Q">
    <property type="method" value="X-ray"/>
    <property type="resolution" value="2.38 A"/>
    <property type="chains" value="A=30-239"/>
</dbReference>
<dbReference type="PDBsum" id="4F8Q"/>
<dbReference type="SMR" id="P78410"/>
<dbReference type="BioGRID" id="116293">
    <property type="interactions" value="36"/>
</dbReference>
<dbReference type="FunCoup" id="P78410">
    <property type="interactions" value="413"/>
</dbReference>
<dbReference type="IntAct" id="P78410">
    <property type="interactions" value="14"/>
</dbReference>
<dbReference type="STRING" id="9606.ENSP00000366937"/>
<dbReference type="GlyConnect" id="1049">
    <property type="glycosylation" value="1 N-Linked glycan (1 site)"/>
</dbReference>
<dbReference type="GlyCosmos" id="P78410">
    <property type="glycosylation" value="1 site, No reported glycans"/>
</dbReference>
<dbReference type="GlyGen" id="P78410">
    <property type="glycosylation" value="1 site"/>
</dbReference>
<dbReference type="iPTMnet" id="P78410"/>
<dbReference type="PhosphoSitePlus" id="P78410"/>
<dbReference type="BioMuta" id="BTN3A2"/>
<dbReference type="DMDM" id="67462189"/>
<dbReference type="jPOST" id="P78410"/>
<dbReference type="MassIVE" id="P78410"/>
<dbReference type="PaxDb" id="9606-ENSP00000348751"/>
<dbReference type="PeptideAtlas" id="P78410"/>
<dbReference type="ProteomicsDB" id="27417"/>
<dbReference type="ProteomicsDB" id="29764"/>
<dbReference type="ProteomicsDB" id="57615">
    <molecule id="P78410-1"/>
</dbReference>
<dbReference type="Pumba" id="P78410"/>
<dbReference type="Antibodypedia" id="25604">
    <property type="antibodies" value="125 antibodies from 19 providers"/>
</dbReference>
<dbReference type="DNASU" id="11118"/>
<dbReference type="Ensembl" id="ENST00000356386.6">
    <molecule id="P78410-1"/>
    <property type="protein sequence ID" value="ENSP00000348751.2"/>
    <property type="gene ID" value="ENSG00000186470.14"/>
</dbReference>
<dbReference type="Ensembl" id="ENST00000377708.7">
    <molecule id="P78410-1"/>
    <property type="protein sequence ID" value="ENSP00000366937.2"/>
    <property type="gene ID" value="ENSG00000186470.14"/>
</dbReference>
<dbReference type="Ensembl" id="ENST00000396934.7">
    <molecule id="P78410-2"/>
    <property type="protein sequence ID" value="ENSP00000380140.3"/>
    <property type="gene ID" value="ENSG00000186470.14"/>
</dbReference>
<dbReference type="Ensembl" id="ENST00000396948.5">
    <molecule id="P78410-1"/>
    <property type="protein sequence ID" value="ENSP00000380152.1"/>
    <property type="gene ID" value="ENSG00000186470.14"/>
</dbReference>
<dbReference type="Ensembl" id="ENST00000508906.6">
    <molecule id="P78410-3"/>
    <property type="protein sequence ID" value="ENSP00000442687.1"/>
    <property type="gene ID" value="ENSG00000186470.14"/>
</dbReference>
<dbReference type="Ensembl" id="ENST00000527422.5">
    <molecule id="P78410-1"/>
    <property type="protein sequence ID" value="ENSP00000432138.1"/>
    <property type="gene ID" value="ENSG00000186470.14"/>
</dbReference>
<dbReference type="GeneID" id="11118"/>
<dbReference type="KEGG" id="hsa:11118"/>
<dbReference type="MANE-Select" id="ENST00000377708.7">
    <property type="protein sequence ID" value="ENSP00000366937.2"/>
    <property type="RefSeq nucleotide sequence ID" value="NM_007047.5"/>
    <property type="RefSeq protein sequence ID" value="NP_008978.2"/>
</dbReference>
<dbReference type="UCSC" id="uc003nhp.5">
    <molecule id="P78410-1"/>
    <property type="organism name" value="human"/>
</dbReference>
<dbReference type="AGR" id="HGNC:1139"/>
<dbReference type="CTD" id="11118"/>
<dbReference type="DisGeNET" id="11118"/>
<dbReference type="GeneCards" id="BTN3A2"/>
<dbReference type="HGNC" id="HGNC:1139">
    <property type="gene designation" value="BTN3A2"/>
</dbReference>
<dbReference type="HPA" id="ENSG00000186470">
    <property type="expression patterns" value="Tissue enhanced (lymphoid)"/>
</dbReference>
<dbReference type="MIM" id="613594">
    <property type="type" value="gene"/>
</dbReference>
<dbReference type="neXtProt" id="NX_P78410"/>
<dbReference type="OpenTargets" id="ENSG00000186470"/>
<dbReference type="PharmGKB" id="PA25460"/>
<dbReference type="VEuPathDB" id="HostDB:ENSG00000186470"/>
<dbReference type="eggNOG" id="ENOG502QSRZ">
    <property type="taxonomic scope" value="Eukaryota"/>
</dbReference>
<dbReference type="GeneTree" id="ENSGT00940000162723"/>
<dbReference type="InParanoid" id="P78410"/>
<dbReference type="OMA" id="WAREYLQ"/>
<dbReference type="OrthoDB" id="8901134at2759"/>
<dbReference type="PAN-GO" id="P78410">
    <property type="GO annotations" value="4 GO annotations based on evolutionary models"/>
</dbReference>
<dbReference type="PhylomeDB" id="P78410"/>
<dbReference type="TreeFam" id="TF331083"/>
<dbReference type="PathwayCommons" id="P78410"/>
<dbReference type="Reactome" id="R-HSA-8851680">
    <property type="pathway name" value="Butyrophilin (BTN) family interactions"/>
</dbReference>
<dbReference type="SignaLink" id="P78410"/>
<dbReference type="BioGRID-ORCS" id="11118">
    <property type="hits" value="18 hits in 1140 CRISPR screens"/>
</dbReference>
<dbReference type="ChiTaRS" id="BTN3A2">
    <property type="organism name" value="human"/>
</dbReference>
<dbReference type="EvolutionaryTrace" id="P78410"/>
<dbReference type="GenomeRNAi" id="11118"/>
<dbReference type="Pharos" id="P78410">
    <property type="development level" value="Tbio"/>
</dbReference>
<dbReference type="PRO" id="PR:P78410"/>
<dbReference type="Proteomes" id="UP000005640">
    <property type="component" value="Chromosome 6"/>
</dbReference>
<dbReference type="RNAct" id="P78410">
    <property type="molecule type" value="protein"/>
</dbReference>
<dbReference type="Bgee" id="ENSG00000186470">
    <property type="expression patterns" value="Expressed in granulocyte and 194 other cell types or tissues"/>
</dbReference>
<dbReference type="ExpressionAtlas" id="P78410">
    <property type="expression patterns" value="baseline and differential"/>
</dbReference>
<dbReference type="GO" id="GO:0009897">
    <property type="term" value="C:external side of plasma membrane"/>
    <property type="evidence" value="ECO:0000318"/>
    <property type="project" value="GO_Central"/>
</dbReference>
<dbReference type="GO" id="GO:0016020">
    <property type="term" value="C:membrane"/>
    <property type="evidence" value="ECO:0007005"/>
    <property type="project" value="UniProtKB"/>
</dbReference>
<dbReference type="GO" id="GO:0005886">
    <property type="term" value="C:plasma membrane"/>
    <property type="evidence" value="ECO:0000314"/>
    <property type="project" value="UniProtKB"/>
</dbReference>
<dbReference type="GO" id="GO:0005102">
    <property type="term" value="F:signaling receptor binding"/>
    <property type="evidence" value="ECO:0000318"/>
    <property type="project" value="GO_Central"/>
</dbReference>
<dbReference type="GO" id="GO:0032729">
    <property type="term" value="P:positive regulation of type II interferon production"/>
    <property type="evidence" value="ECO:0000315"/>
    <property type="project" value="UniProtKB"/>
</dbReference>
<dbReference type="GO" id="GO:0001817">
    <property type="term" value="P:regulation of cytokine production"/>
    <property type="evidence" value="ECO:0000318"/>
    <property type="project" value="GO_Central"/>
</dbReference>
<dbReference type="GO" id="GO:0002456">
    <property type="term" value="P:T cell mediated immunity"/>
    <property type="evidence" value="ECO:0000315"/>
    <property type="project" value="UniProtKB"/>
</dbReference>
<dbReference type="GO" id="GO:0050852">
    <property type="term" value="P:T cell receptor signaling pathway"/>
    <property type="evidence" value="ECO:0000318"/>
    <property type="project" value="GO_Central"/>
</dbReference>
<dbReference type="CDD" id="cd05713">
    <property type="entry name" value="IgV_MOG_like"/>
    <property type="match status" value="1"/>
</dbReference>
<dbReference type="FunFam" id="2.60.40.10:FF:000088">
    <property type="entry name" value="Butyrophilin subfamily 1 member A1"/>
    <property type="match status" value="1"/>
</dbReference>
<dbReference type="FunFam" id="2.60.40.10:FF:000208">
    <property type="entry name" value="Butyrophilin subfamily 1 member A1"/>
    <property type="match status" value="1"/>
</dbReference>
<dbReference type="Gene3D" id="2.60.40.10">
    <property type="entry name" value="Immunoglobulins"/>
    <property type="match status" value="2"/>
</dbReference>
<dbReference type="InterPro" id="IPR053896">
    <property type="entry name" value="BTN3A2-like_Ig-C"/>
</dbReference>
<dbReference type="InterPro" id="IPR007110">
    <property type="entry name" value="Ig-like_dom"/>
</dbReference>
<dbReference type="InterPro" id="IPR036179">
    <property type="entry name" value="Ig-like_dom_sf"/>
</dbReference>
<dbReference type="InterPro" id="IPR013783">
    <property type="entry name" value="Ig-like_fold"/>
</dbReference>
<dbReference type="InterPro" id="IPR003599">
    <property type="entry name" value="Ig_sub"/>
</dbReference>
<dbReference type="InterPro" id="IPR013106">
    <property type="entry name" value="Ig_V-set"/>
</dbReference>
<dbReference type="InterPro" id="IPR050504">
    <property type="entry name" value="IgSF_BTN/MOG"/>
</dbReference>
<dbReference type="PANTHER" id="PTHR24100">
    <property type="entry name" value="BUTYROPHILIN"/>
    <property type="match status" value="1"/>
</dbReference>
<dbReference type="PANTHER" id="PTHR24100:SF115">
    <property type="entry name" value="BUTYROPHILIN SUBFAMILY 3 MEMBER A2"/>
    <property type="match status" value="1"/>
</dbReference>
<dbReference type="Pfam" id="PF22705">
    <property type="entry name" value="C2-set_3"/>
    <property type="match status" value="1"/>
</dbReference>
<dbReference type="Pfam" id="PF07686">
    <property type="entry name" value="V-set"/>
    <property type="match status" value="1"/>
</dbReference>
<dbReference type="SMART" id="SM00409">
    <property type="entry name" value="IG"/>
    <property type="match status" value="1"/>
</dbReference>
<dbReference type="SMART" id="SM00406">
    <property type="entry name" value="IGv"/>
    <property type="match status" value="1"/>
</dbReference>
<dbReference type="SUPFAM" id="SSF48726">
    <property type="entry name" value="Immunoglobulin"/>
    <property type="match status" value="2"/>
</dbReference>
<dbReference type="PROSITE" id="PS50835">
    <property type="entry name" value="IG_LIKE"/>
    <property type="match status" value="1"/>
</dbReference>
<feature type="signal peptide" evidence="1">
    <location>
        <begin position="1"/>
        <end position="29"/>
    </location>
</feature>
<feature type="chain" id="PRO_0000014533" description="Butyrophilin subfamily 3 member A2">
    <location>
        <begin position="30"/>
        <end position="334"/>
    </location>
</feature>
<feature type="topological domain" description="Extracellular" evidence="1">
    <location>
        <begin position="30"/>
        <end position="248"/>
    </location>
</feature>
<feature type="transmembrane region" description="Helical" evidence="1">
    <location>
        <begin position="249"/>
        <end position="269"/>
    </location>
</feature>
<feature type="topological domain" description="Cytoplasmic" evidence="1">
    <location>
        <begin position="270"/>
        <end position="334"/>
    </location>
</feature>
<feature type="domain" description="Ig-like V-type">
    <location>
        <begin position="30"/>
        <end position="139"/>
    </location>
</feature>
<feature type="coiled-coil region" evidence="1">
    <location>
        <begin position="272"/>
        <end position="319"/>
    </location>
</feature>
<feature type="modified residue" description="Phosphoserine" evidence="10">
    <location>
        <position position="282"/>
    </location>
</feature>
<feature type="modified residue" description="Phosphoserine" evidence="10">
    <location>
        <position position="286"/>
    </location>
</feature>
<feature type="glycosylation site" description="N-linked (GlcNAc...) asparagine" evidence="1">
    <location>
        <position position="115"/>
    </location>
</feature>
<feature type="disulfide bond" evidence="2 7">
    <location>
        <begin position="52"/>
        <end position="126"/>
    </location>
</feature>
<feature type="disulfide bond" evidence="2 7">
    <location>
        <begin position="166"/>
        <end position="220"/>
    </location>
</feature>
<feature type="splice variant" id="VSP_045906" description="In isoform 3." evidence="9">
    <location>
        <begin position="1"/>
        <end position="42"/>
    </location>
</feature>
<feature type="splice variant" id="VSP_045907" description="In isoform 2." evidence="8">
    <original>MKMASSLAFLLLNFHVSLLLVQLLTPCS</original>
    <variation>MGIPR</variation>
    <location>
        <begin position="1"/>
        <end position="28"/>
    </location>
</feature>
<feature type="sequence variant" id="VAR_049833" description="In dbSNP:rs9379861.">
    <original>R</original>
    <variation>T</variation>
    <location>
        <position position="167"/>
    </location>
</feature>
<feature type="sequence variant" id="VAR_026211" description="In dbSNP:rs9358936." evidence="3">
    <original>N</original>
    <variation>D</variation>
    <location>
        <position position="181"/>
    </location>
</feature>
<feature type="sequence variant" id="VAR_049834" description="In dbSNP:rs12205731." evidence="3">
    <original>A</original>
    <variation>T</variation>
    <location>
        <position position="182"/>
    </location>
</feature>
<feature type="sequence variant" id="VAR_049835" description="In dbSNP:rs35183513.">
    <original>R</original>
    <variation>K</variation>
    <location>
        <position position="211"/>
    </location>
</feature>
<feature type="sequence variant" id="VAR_049836" description="In dbSNP:rs13216828." evidence="3">
    <original>S</original>
    <variation>N</variation>
    <location>
        <position position="307"/>
    </location>
</feature>
<feature type="sequence conflict" description="In Ref. 4; BAG64615." evidence="9" ref="4">
    <original>M</original>
    <variation>L</variation>
    <location>
        <position position="63"/>
    </location>
</feature>
<feature type="sequence conflict" description="In Ref. 3; AAF76140." evidence="9" ref="3">
    <original>S</original>
    <variation>G</variation>
    <location>
        <position position="180"/>
    </location>
</feature>
<feature type="sequence conflict" description="In Ref. 3; AAF76140." evidence="9" ref="3">
    <original>RG</original>
    <variation>KS</variation>
    <location>
        <begin position="211"/>
        <end position="212"/>
    </location>
</feature>
<feature type="sequence conflict" description="In Ref. 2; AAC02655." evidence="9" ref="2">
    <original>S</original>
    <variation>L</variation>
    <location>
        <position position="327"/>
    </location>
</feature>
<feature type="strand" evidence="11">
    <location>
        <begin position="32"/>
        <end position="34"/>
    </location>
</feature>
<feature type="strand" evidence="11">
    <location>
        <begin position="40"/>
        <end position="43"/>
    </location>
</feature>
<feature type="strand" evidence="11">
    <location>
        <begin position="48"/>
        <end position="56"/>
    </location>
</feature>
<feature type="strand" evidence="11">
    <location>
        <begin position="63"/>
        <end position="69"/>
    </location>
</feature>
<feature type="turn" evidence="11">
    <location>
        <begin position="70"/>
        <end position="73"/>
    </location>
</feature>
<feature type="strand" evidence="11">
    <location>
        <begin position="74"/>
        <end position="80"/>
    </location>
</feature>
<feature type="helix" evidence="11">
    <location>
        <begin position="86"/>
        <end position="88"/>
    </location>
</feature>
<feature type="helix" evidence="11">
    <location>
        <begin position="91"/>
        <end position="93"/>
    </location>
</feature>
<feature type="turn" evidence="11">
    <location>
        <begin position="94"/>
        <end position="96"/>
    </location>
</feature>
<feature type="strand" evidence="11">
    <location>
        <begin position="97"/>
        <end position="100"/>
    </location>
</feature>
<feature type="helix" evidence="11">
    <location>
        <begin position="104"/>
        <end position="106"/>
    </location>
</feature>
<feature type="strand" evidence="11">
    <location>
        <begin position="108"/>
        <end position="115"/>
    </location>
</feature>
<feature type="helix" evidence="11">
    <location>
        <begin position="118"/>
        <end position="120"/>
    </location>
</feature>
<feature type="strand" evidence="11">
    <location>
        <begin position="122"/>
        <end position="130"/>
    </location>
</feature>
<feature type="strand" evidence="11">
    <location>
        <begin position="133"/>
        <end position="145"/>
    </location>
</feature>
<feature type="strand" evidence="11">
    <location>
        <begin position="151"/>
        <end position="158"/>
    </location>
</feature>
<feature type="strand" evidence="11">
    <location>
        <begin position="161"/>
        <end position="173"/>
    </location>
</feature>
<feature type="strand" evidence="11">
    <location>
        <begin position="176"/>
        <end position="180"/>
    </location>
</feature>
<feature type="strand" evidence="11">
    <location>
        <begin position="202"/>
        <end position="210"/>
    </location>
</feature>
<feature type="strand" evidence="11">
    <location>
        <begin position="217"/>
        <end position="224"/>
    </location>
</feature>
<feature type="turn" evidence="11">
    <location>
        <begin position="225"/>
        <end position="228"/>
    </location>
</feature>
<feature type="strand" evidence="11">
    <location>
        <begin position="229"/>
        <end position="236"/>
    </location>
</feature>
<gene>
    <name type="primary">BTN3A2</name>
    <name type="synonym">BT3.2</name>
    <name type="synonym">BTF3</name>
    <name type="synonym">BTF4</name>
</gene>
<evidence type="ECO:0000255" key="1"/>
<evidence type="ECO:0000255" key="2">
    <source>
        <dbReference type="PROSITE-ProRule" id="PRU00114"/>
    </source>
</evidence>
<evidence type="ECO:0000269" key="3">
    <source>
    </source>
</evidence>
<evidence type="ECO:0000269" key="4">
    <source>
    </source>
</evidence>
<evidence type="ECO:0000269" key="5">
    <source>
    </source>
</evidence>
<evidence type="ECO:0000269" key="6">
    <source>
    </source>
</evidence>
<evidence type="ECO:0000269" key="7">
    <source>
    </source>
</evidence>
<evidence type="ECO:0000303" key="8">
    <source>
    </source>
</evidence>
<evidence type="ECO:0000305" key="9"/>
<evidence type="ECO:0007744" key="10">
    <source>
    </source>
</evidence>
<evidence type="ECO:0007829" key="11">
    <source>
        <dbReference type="PDB" id="4F8Q"/>
    </source>
</evidence>
<accession>P78410</accession>
<accession>B4DRT7</accession>
<accession>B4E103</accession>
<accession>F5H791</accession>
<accession>F8W6E0</accession>
<accession>O00477</accession>
<accession>O15338</accession>
<accession>O75658</accession>
<accession>Q76PA0</accession>
<accession>Q9BU81</accession>
<accession>Q9NR44</accession>
<reference key="1">
    <citation type="journal article" date="1997" name="Genome Res.">
        <title>A 1.1-Mb transcript map of the hereditary hemochromatosis locus.</title>
        <authorList>
            <person name="Ruddy D.A."/>
            <person name="Kronmal G.S."/>
            <person name="Lee V.K."/>
            <person name="Mintier G.A."/>
            <person name="Quintana L."/>
            <person name="Domingo R. Jr."/>
            <person name="Meyer N.C."/>
            <person name="Irrinki A."/>
            <person name="McClelland E.E."/>
            <person name="Fullan A."/>
            <person name="Mapa F.A."/>
            <person name="Moore T."/>
            <person name="Thomas W."/>
            <person name="Loeb D.B."/>
            <person name="Harmon C."/>
            <person name="Tsuchihashi Z."/>
            <person name="Wolff R.K."/>
            <person name="Schatzman R.C."/>
            <person name="Feder J.N."/>
        </authorList>
    </citation>
    <scope>NUCLEOTIDE SEQUENCE [MRNA] (ISOFORM 1)</scope>
</reference>
<reference key="2">
    <citation type="journal article" date="1997" name="Immunogenetics">
        <title>Cloning, localization, and structure of new members of the butyrophilin gene family in the juxta-telomeric region of the major histocompatibility complex.</title>
        <authorList>
            <person name="Tazi-Ahnini R."/>
            <person name="Henry J."/>
            <person name="Offer C."/>
            <person name="Bouissou-Bouchouata C."/>
            <person name="Mather I.H."/>
            <person name="Pontarotti P."/>
        </authorList>
    </citation>
    <scope>NUCLEOTIDE SEQUENCE [GENOMIC DNA / MRNA] (ISOFORM 1)</scope>
</reference>
<reference key="3">
    <citation type="journal article" date="2001" name="Genomics">
        <title>The cluster of BTN genes in the extended major histocompatibility complex.</title>
        <authorList>
            <person name="Rhodes D.A."/>
            <person name="Stammers M."/>
            <person name="Malcherek G."/>
            <person name="Beck S."/>
            <person name="Trowsdale J."/>
        </authorList>
    </citation>
    <scope>NUCLEOTIDE SEQUENCE [MRNA] (ISOFORM 1)</scope>
</reference>
<reference key="4">
    <citation type="journal article" date="2004" name="Nat. Genet.">
        <title>Complete sequencing and characterization of 21,243 full-length human cDNAs.</title>
        <authorList>
            <person name="Ota T."/>
            <person name="Suzuki Y."/>
            <person name="Nishikawa T."/>
            <person name="Otsuki T."/>
            <person name="Sugiyama T."/>
            <person name="Irie R."/>
            <person name="Wakamatsu A."/>
            <person name="Hayashi K."/>
            <person name="Sato H."/>
            <person name="Nagai K."/>
            <person name="Kimura K."/>
            <person name="Makita H."/>
            <person name="Sekine M."/>
            <person name="Obayashi M."/>
            <person name="Nishi T."/>
            <person name="Shibahara T."/>
            <person name="Tanaka T."/>
            <person name="Ishii S."/>
            <person name="Yamamoto J."/>
            <person name="Saito K."/>
            <person name="Kawai Y."/>
            <person name="Isono Y."/>
            <person name="Nakamura Y."/>
            <person name="Nagahari K."/>
            <person name="Murakami K."/>
            <person name="Yasuda T."/>
            <person name="Iwayanagi T."/>
            <person name="Wagatsuma M."/>
            <person name="Shiratori A."/>
            <person name="Sudo H."/>
            <person name="Hosoiri T."/>
            <person name="Kaku Y."/>
            <person name="Kodaira H."/>
            <person name="Kondo H."/>
            <person name="Sugawara M."/>
            <person name="Takahashi M."/>
            <person name="Kanda K."/>
            <person name="Yokoi T."/>
            <person name="Furuya T."/>
            <person name="Kikkawa E."/>
            <person name="Omura Y."/>
            <person name="Abe K."/>
            <person name="Kamihara K."/>
            <person name="Katsuta N."/>
            <person name="Sato K."/>
            <person name="Tanikawa M."/>
            <person name="Yamazaki M."/>
            <person name="Ninomiya K."/>
            <person name="Ishibashi T."/>
            <person name="Yamashita H."/>
            <person name="Murakawa K."/>
            <person name="Fujimori K."/>
            <person name="Tanai H."/>
            <person name="Kimata M."/>
            <person name="Watanabe M."/>
            <person name="Hiraoka S."/>
            <person name="Chiba Y."/>
            <person name="Ishida S."/>
            <person name="Ono Y."/>
            <person name="Takiguchi S."/>
            <person name="Watanabe S."/>
            <person name="Yosida M."/>
            <person name="Hotuta T."/>
            <person name="Kusano J."/>
            <person name="Kanehori K."/>
            <person name="Takahashi-Fujii A."/>
            <person name="Hara H."/>
            <person name="Tanase T.-O."/>
            <person name="Nomura Y."/>
            <person name="Togiya S."/>
            <person name="Komai F."/>
            <person name="Hara R."/>
            <person name="Takeuchi K."/>
            <person name="Arita M."/>
            <person name="Imose N."/>
            <person name="Musashino K."/>
            <person name="Yuuki H."/>
            <person name="Oshima A."/>
            <person name="Sasaki N."/>
            <person name="Aotsuka S."/>
            <person name="Yoshikawa Y."/>
            <person name="Matsunawa H."/>
            <person name="Ichihara T."/>
            <person name="Shiohata N."/>
            <person name="Sano S."/>
            <person name="Moriya S."/>
            <person name="Momiyama H."/>
            <person name="Satoh N."/>
            <person name="Takami S."/>
            <person name="Terashima Y."/>
            <person name="Suzuki O."/>
            <person name="Nakagawa S."/>
            <person name="Senoh A."/>
            <person name="Mizoguchi H."/>
            <person name="Goto Y."/>
            <person name="Shimizu F."/>
            <person name="Wakebe H."/>
            <person name="Hishigaki H."/>
            <person name="Watanabe T."/>
            <person name="Sugiyama A."/>
            <person name="Takemoto M."/>
            <person name="Kawakami B."/>
            <person name="Yamazaki M."/>
            <person name="Watanabe K."/>
            <person name="Kumagai A."/>
            <person name="Itakura S."/>
            <person name="Fukuzumi Y."/>
            <person name="Fujimori Y."/>
            <person name="Komiyama M."/>
            <person name="Tashiro H."/>
            <person name="Tanigami A."/>
            <person name="Fujiwara T."/>
            <person name="Ono T."/>
            <person name="Yamada K."/>
            <person name="Fujii Y."/>
            <person name="Ozaki K."/>
            <person name="Hirao M."/>
            <person name="Ohmori Y."/>
            <person name="Kawabata A."/>
            <person name="Hikiji T."/>
            <person name="Kobatake N."/>
            <person name="Inagaki H."/>
            <person name="Ikema Y."/>
            <person name="Okamoto S."/>
            <person name="Okitani R."/>
            <person name="Kawakami T."/>
            <person name="Noguchi S."/>
            <person name="Itoh T."/>
            <person name="Shigeta K."/>
            <person name="Senba T."/>
            <person name="Matsumura K."/>
            <person name="Nakajima Y."/>
            <person name="Mizuno T."/>
            <person name="Morinaga M."/>
            <person name="Sasaki M."/>
            <person name="Togashi T."/>
            <person name="Oyama M."/>
            <person name="Hata H."/>
            <person name="Watanabe M."/>
            <person name="Komatsu T."/>
            <person name="Mizushima-Sugano J."/>
            <person name="Satoh T."/>
            <person name="Shirai Y."/>
            <person name="Takahashi Y."/>
            <person name="Nakagawa K."/>
            <person name="Okumura K."/>
            <person name="Nagase T."/>
            <person name="Nomura N."/>
            <person name="Kikuchi H."/>
            <person name="Masuho Y."/>
            <person name="Yamashita R."/>
            <person name="Nakai K."/>
            <person name="Yada T."/>
            <person name="Nakamura Y."/>
            <person name="Ohara O."/>
            <person name="Isogai T."/>
            <person name="Sugano S."/>
        </authorList>
    </citation>
    <scope>NUCLEOTIDE SEQUENCE [LARGE SCALE MRNA] (ISOFORM 2)</scope>
    <scope>VARIANTS ASP-181; THR-182 AND ASN-307</scope>
    <source>
        <tissue>Thymus</tissue>
        <tissue>Tongue</tissue>
    </source>
</reference>
<reference key="5">
    <citation type="journal article" date="2003" name="Nature">
        <title>The DNA sequence and analysis of human chromosome 6.</title>
        <authorList>
            <person name="Mungall A.J."/>
            <person name="Palmer S.A."/>
            <person name="Sims S.K."/>
            <person name="Edwards C.A."/>
            <person name="Ashurst J.L."/>
            <person name="Wilming L."/>
            <person name="Jones M.C."/>
            <person name="Horton R."/>
            <person name="Hunt S.E."/>
            <person name="Scott C.E."/>
            <person name="Gilbert J.G.R."/>
            <person name="Clamp M.E."/>
            <person name="Bethel G."/>
            <person name="Milne S."/>
            <person name="Ainscough R."/>
            <person name="Almeida J.P."/>
            <person name="Ambrose K.D."/>
            <person name="Andrews T.D."/>
            <person name="Ashwell R.I.S."/>
            <person name="Babbage A.K."/>
            <person name="Bagguley C.L."/>
            <person name="Bailey J."/>
            <person name="Banerjee R."/>
            <person name="Barker D.J."/>
            <person name="Barlow K.F."/>
            <person name="Bates K."/>
            <person name="Beare D.M."/>
            <person name="Beasley H."/>
            <person name="Beasley O."/>
            <person name="Bird C.P."/>
            <person name="Blakey S.E."/>
            <person name="Bray-Allen S."/>
            <person name="Brook J."/>
            <person name="Brown A.J."/>
            <person name="Brown J.Y."/>
            <person name="Burford D.C."/>
            <person name="Burrill W."/>
            <person name="Burton J."/>
            <person name="Carder C."/>
            <person name="Carter N.P."/>
            <person name="Chapman J.C."/>
            <person name="Clark S.Y."/>
            <person name="Clark G."/>
            <person name="Clee C.M."/>
            <person name="Clegg S."/>
            <person name="Cobley V."/>
            <person name="Collier R.E."/>
            <person name="Collins J.E."/>
            <person name="Colman L.K."/>
            <person name="Corby N.R."/>
            <person name="Coville G.J."/>
            <person name="Culley K.M."/>
            <person name="Dhami P."/>
            <person name="Davies J."/>
            <person name="Dunn M."/>
            <person name="Earthrowl M.E."/>
            <person name="Ellington A.E."/>
            <person name="Evans K.A."/>
            <person name="Faulkner L."/>
            <person name="Francis M.D."/>
            <person name="Frankish A."/>
            <person name="Frankland J."/>
            <person name="French L."/>
            <person name="Garner P."/>
            <person name="Garnett J."/>
            <person name="Ghori M.J."/>
            <person name="Gilby L.M."/>
            <person name="Gillson C.J."/>
            <person name="Glithero R.J."/>
            <person name="Grafham D.V."/>
            <person name="Grant M."/>
            <person name="Gribble S."/>
            <person name="Griffiths C."/>
            <person name="Griffiths M.N.D."/>
            <person name="Hall R."/>
            <person name="Halls K.S."/>
            <person name="Hammond S."/>
            <person name="Harley J.L."/>
            <person name="Hart E.A."/>
            <person name="Heath P.D."/>
            <person name="Heathcott R."/>
            <person name="Holmes S.J."/>
            <person name="Howden P.J."/>
            <person name="Howe K.L."/>
            <person name="Howell G.R."/>
            <person name="Huckle E."/>
            <person name="Humphray S.J."/>
            <person name="Humphries M.D."/>
            <person name="Hunt A.R."/>
            <person name="Johnson C.M."/>
            <person name="Joy A.A."/>
            <person name="Kay M."/>
            <person name="Keenan S.J."/>
            <person name="Kimberley A.M."/>
            <person name="King A."/>
            <person name="Laird G.K."/>
            <person name="Langford C."/>
            <person name="Lawlor S."/>
            <person name="Leongamornlert D.A."/>
            <person name="Leversha M."/>
            <person name="Lloyd C.R."/>
            <person name="Lloyd D.M."/>
            <person name="Loveland J.E."/>
            <person name="Lovell J."/>
            <person name="Martin S."/>
            <person name="Mashreghi-Mohammadi M."/>
            <person name="Maslen G.L."/>
            <person name="Matthews L."/>
            <person name="McCann O.T."/>
            <person name="McLaren S.J."/>
            <person name="McLay K."/>
            <person name="McMurray A."/>
            <person name="Moore M.J.F."/>
            <person name="Mullikin J.C."/>
            <person name="Niblett D."/>
            <person name="Nickerson T."/>
            <person name="Novik K.L."/>
            <person name="Oliver K."/>
            <person name="Overton-Larty E.K."/>
            <person name="Parker A."/>
            <person name="Patel R."/>
            <person name="Pearce A.V."/>
            <person name="Peck A.I."/>
            <person name="Phillimore B.J.C.T."/>
            <person name="Phillips S."/>
            <person name="Plumb R.W."/>
            <person name="Porter K.M."/>
            <person name="Ramsey Y."/>
            <person name="Ranby S.A."/>
            <person name="Rice C.M."/>
            <person name="Ross M.T."/>
            <person name="Searle S.M."/>
            <person name="Sehra H.K."/>
            <person name="Sheridan E."/>
            <person name="Skuce C.D."/>
            <person name="Smith S."/>
            <person name="Smith M."/>
            <person name="Spraggon L."/>
            <person name="Squares S.L."/>
            <person name="Steward C.A."/>
            <person name="Sycamore N."/>
            <person name="Tamlyn-Hall G."/>
            <person name="Tester J."/>
            <person name="Theaker A.J."/>
            <person name="Thomas D.W."/>
            <person name="Thorpe A."/>
            <person name="Tracey A."/>
            <person name="Tromans A."/>
            <person name="Tubby B."/>
            <person name="Wall M."/>
            <person name="Wallis J.M."/>
            <person name="West A.P."/>
            <person name="White S.S."/>
            <person name="Whitehead S.L."/>
            <person name="Whittaker H."/>
            <person name="Wild A."/>
            <person name="Willey D.J."/>
            <person name="Wilmer T.E."/>
            <person name="Wood J.M."/>
            <person name="Wray P.W."/>
            <person name="Wyatt J.C."/>
            <person name="Young L."/>
            <person name="Younger R.M."/>
            <person name="Bentley D.R."/>
            <person name="Coulson A."/>
            <person name="Durbin R.M."/>
            <person name="Hubbard T."/>
            <person name="Sulston J.E."/>
            <person name="Dunham I."/>
            <person name="Rogers J."/>
            <person name="Beck S."/>
        </authorList>
    </citation>
    <scope>NUCLEOTIDE SEQUENCE [LARGE SCALE GENOMIC DNA]</scope>
</reference>
<reference key="6">
    <citation type="journal article" date="2004" name="Genome Res.">
        <title>The status, quality, and expansion of the NIH full-length cDNA project: the Mammalian Gene Collection (MGC).</title>
        <authorList>
            <consortium name="The MGC Project Team"/>
        </authorList>
    </citation>
    <scope>NUCLEOTIDE SEQUENCE [LARGE SCALE MRNA] (ISOFORM 1)</scope>
    <source>
        <tissue>Placenta</tissue>
        <tissue>Skin</tissue>
    </source>
</reference>
<reference key="7">
    <citation type="journal article" date="2009" name="Sci. Signal.">
        <title>Quantitative phosphoproteomic analysis of T cell receptor signaling reveals system-wide modulation of protein-protein interactions.</title>
        <authorList>
            <person name="Mayya V."/>
            <person name="Lundgren D.H."/>
            <person name="Hwang S.-I."/>
            <person name="Rezaul K."/>
            <person name="Wu L."/>
            <person name="Eng J.K."/>
            <person name="Rodionov V."/>
            <person name="Han D.K."/>
        </authorList>
    </citation>
    <scope>PHOSPHORYLATION [LARGE SCALE ANALYSIS] AT SER-282 AND SER-286</scope>
    <scope>IDENTIFICATION BY MASS SPECTROMETRY [LARGE SCALE ANALYSIS]</scope>
    <source>
        <tissue>Leukemic T-cell</tissue>
    </source>
</reference>
<reference key="8">
    <citation type="journal article" date="2010" name="J. Leukoc. Biol.">
        <title>Stimulation of human butyrophilin 3 molecules results in negative regulation of cellular immunity.</title>
        <authorList>
            <person name="Yamashiro H."/>
            <person name="Yoshizaki S."/>
            <person name="Tadaki T."/>
            <person name="Egawa K."/>
            <person name="Seo N."/>
        </authorList>
    </citation>
    <scope>GLYCOSYLATION</scope>
</reference>
<reference key="9">
    <citation type="journal article" date="2011" name="Eur. J. Immunol.">
        <title>Differential role for CD277 as a co-regulator of the immune signal in T and NK cells.</title>
        <authorList>
            <person name="Messal N."/>
            <person name="Mamessier E."/>
            <person name="Sylvain A."/>
            <person name="Celis-Gutierrez J."/>
            <person name="Thibult M.L."/>
            <person name="Chetaille B."/>
            <person name="Firaguay G."/>
            <person name="Pastor S."/>
            <person name="Guillaume Y."/>
            <person name="Wang Q."/>
            <person name="Hirsch I."/>
            <person name="Nunes J.A."/>
            <person name="Olive D."/>
        </authorList>
    </citation>
    <scope>FUNCTION</scope>
    <scope>SUBCELLULAR LOCATION</scope>
    <scope>TISSUE SPECIFICITY</scope>
</reference>
<reference key="10">
    <citation type="journal article" date="2012" name="Blood">
        <title>Key implication of CD277/butyrophilin-3 (BTN3A) in cellular stress sensing by a major human gammadelta T-cell subset.</title>
        <authorList>
            <person name="Harly C."/>
            <person name="Guillaume Y."/>
            <person name="Nedellec S."/>
            <person name="Peigne C.M."/>
            <person name="Monkkonen H."/>
            <person name="Monkkonen J."/>
            <person name="Li J."/>
            <person name="Kuball J."/>
            <person name="Adams E.J."/>
            <person name="Netzer S."/>
            <person name="Dechanet-Merville J."/>
            <person name="Leger A."/>
            <person name="Herrmann T."/>
            <person name="Breathnach R."/>
            <person name="Olive D."/>
            <person name="Bonneville M."/>
            <person name="Scotet E."/>
        </authorList>
    </citation>
    <scope>FUNCTION</scope>
    <scope>SUBCELLULAR LOCATION</scope>
</reference>
<reference key="11">
    <citation type="journal article" date="2012" name="J. Biol. Chem.">
        <title>The molecular basis for modulation of human Vgamma9Vdelta2 T cell responses by CD277/butyrophilin-3 (BTN3A)-specific antibodies.</title>
        <authorList>
            <person name="Palakodeti A."/>
            <person name="Sandstrom A."/>
            <person name="Sundaresan L."/>
            <person name="Harly C."/>
            <person name="Nedellec S."/>
            <person name="Olive D."/>
            <person name="Scotet E."/>
            <person name="Bonneville M."/>
            <person name="Adams E.J."/>
        </authorList>
    </citation>
    <scope>X-RAY CRYSTALLOGRAPHY (2.38 ANGSTROMS) OF 30-239</scope>
    <scope>SUBUNIT</scope>
    <scope>DISULFIDE BONDS</scope>
</reference>
<keyword id="KW-0002">3D-structure</keyword>
<keyword id="KW-1064">Adaptive immunity</keyword>
<keyword id="KW-0025">Alternative splicing</keyword>
<keyword id="KW-1003">Cell membrane</keyword>
<keyword id="KW-0175">Coiled coil</keyword>
<keyword id="KW-1015">Disulfide bond</keyword>
<keyword id="KW-0325">Glycoprotein</keyword>
<keyword id="KW-0391">Immunity</keyword>
<keyword id="KW-0393">Immunoglobulin domain</keyword>
<keyword id="KW-0472">Membrane</keyword>
<keyword id="KW-0597">Phosphoprotein</keyword>
<keyword id="KW-1267">Proteomics identification</keyword>
<keyword id="KW-1185">Reference proteome</keyword>
<keyword id="KW-0732">Signal</keyword>
<keyword id="KW-0812">Transmembrane</keyword>
<keyword id="KW-1133">Transmembrane helix</keyword>
<organism>
    <name type="scientific">Homo sapiens</name>
    <name type="common">Human</name>
    <dbReference type="NCBI Taxonomy" id="9606"/>
    <lineage>
        <taxon>Eukaryota</taxon>
        <taxon>Metazoa</taxon>
        <taxon>Chordata</taxon>
        <taxon>Craniata</taxon>
        <taxon>Vertebrata</taxon>
        <taxon>Euteleostomi</taxon>
        <taxon>Mammalia</taxon>
        <taxon>Eutheria</taxon>
        <taxon>Euarchontoglires</taxon>
        <taxon>Primates</taxon>
        <taxon>Haplorrhini</taxon>
        <taxon>Catarrhini</taxon>
        <taxon>Hominidae</taxon>
        <taxon>Homo</taxon>
    </lineage>
</organism>
<proteinExistence type="evidence at protein level"/>
<comment type="function">
    <text evidence="5 6">Plays a role in T-cell responses in the adaptive immune response. Inhibits the release of IFNG from activated T-cells.</text>
</comment>
<comment type="subunit">
    <text evidence="7">Homodimer.</text>
</comment>
<comment type="interaction">
    <interactant intactId="EBI-17564670">
        <id>P78410</id>
    </interactant>
    <interactant intactId="EBI-2809309">
        <id>O00481</id>
        <label>BTN3A1</label>
    </interactant>
    <organismsDiffer>false</organismsDiffer>
    <experiments>5</experiments>
</comment>
<comment type="interaction">
    <interactant intactId="EBI-17564670">
        <id>P78410</id>
    </interactant>
    <interactant intactId="EBI-751440">
        <id>P57739</id>
        <label>CLDN2</label>
    </interactant>
    <organismsDiffer>false</organismsDiffer>
    <experiments>3</experiments>
</comment>
<comment type="interaction">
    <interactant intactId="EBI-17564670">
        <id>P78410</id>
    </interactant>
    <interactant intactId="EBI-748974">
        <id>Q96CV9</id>
        <label>OPTN</label>
    </interactant>
    <organismsDiffer>false</organismsDiffer>
    <experiments>3</experiments>
</comment>
<comment type="subcellular location">
    <subcellularLocation>
        <location evidence="5 6">Cell membrane</location>
        <topology evidence="5 6">Single-pass type I membrane protein</topology>
    </subcellularLocation>
</comment>
<comment type="alternative products">
    <event type="alternative splicing"/>
    <isoform>
        <id>P78410-1</id>
        <name>1</name>
        <sequence type="displayed"/>
    </isoform>
    <isoform>
        <id>P78410-2</id>
        <name>2</name>
        <sequence type="described" ref="VSP_045907"/>
    </isoform>
    <isoform>
        <id>P78410-3</id>
        <name>3</name>
        <sequence type="described" ref="VSP_045906"/>
    </isoform>
</comment>
<comment type="tissue specificity">
    <text evidence="5">Detected in T-cells and natural killer cells.</text>
</comment>
<comment type="PTM">
    <text evidence="4">N-glycosylated.</text>
</comment>
<comment type="similarity">
    <text evidence="9">Belongs to the immunoglobulin superfamily. BTN/MOG family.</text>
</comment>
<comment type="sequence caution" evidence="9">
    <conflict type="frameshift">
        <sequence resource="EMBL-CDS" id="AAB53424"/>
    </conflict>
</comment>
<comment type="sequence caution" evidence="9">
    <conflict type="frameshift">
        <sequence resource="EMBL-CDS" id="AAC02652"/>
    </conflict>
</comment>
<comment type="sequence caution" evidence="9">
    <conflict type="frameshift">
        <sequence resource="EMBL-CDS" id="AAC02655"/>
    </conflict>
</comment>